<proteinExistence type="inferred from homology"/>
<accession>C4L8Y1</accession>
<organism>
    <name type="scientific">Tolumonas auensis (strain DSM 9187 / NBRC 110442 / TA 4)</name>
    <dbReference type="NCBI Taxonomy" id="595494"/>
    <lineage>
        <taxon>Bacteria</taxon>
        <taxon>Pseudomonadati</taxon>
        <taxon>Pseudomonadota</taxon>
        <taxon>Gammaproteobacteria</taxon>
        <taxon>Aeromonadales</taxon>
        <taxon>Aeromonadaceae</taxon>
        <taxon>Tolumonas</taxon>
    </lineage>
</organism>
<name>RLME_TOLAT</name>
<feature type="chain" id="PRO_1000215459" description="Ribosomal RNA large subunit methyltransferase E">
    <location>
        <begin position="1"/>
        <end position="209"/>
    </location>
</feature>
<feature type="active site" description="Proton acceptor" evidence="1">
    <location>
        <position position="164"/>
    </location>
</feature>
<feature type="binding site" evidence="1">
    <location>
        <position position="63"/>
    </location>
    <ligand>
        <name>S-adenosyl-L-methionine</name>
        <dbReference type="ChEBI" id="CHEBI:59789"/>
    </ligand>
</feature>
<feature type="binding site" evidence="1">
    <location>
        <position position="65"/>
    </location>
    <ligand>
        <name>S-adenosyl-L-methionine</name>
        <dbReference type="ChEBI" id="CHEBI:59789"/>
    </ligand>
</feature>
<feature type="binding site" evidence="1">
    <location>
        <position position="83"/>
    </location>
    <ligand>
        <name>S-adenosyl-L-methionine</name>
        <dbReference type="ChEBI" id="CHEBI:59789"/>
    </ligand>
</feature>
<feature type="binding site" evidence="1">
    <location>
        <position position="99"/>
    </location>
    <ligand>
        <name>S-adenosyl-L-methionine</name>
        <dbReference type="ChEBI" id="CHEBI:59789"/>
    </ligand>
</feature>
<feature type="binding site" evidence="1">
    <location>
        <position position="124"/>
    </location>
    <ligand>
        <name>S-adenosyl-L-methionine</name>
        <dbReference type="ChEBI" id="CHEBI:59789"/>
    </ligand>
</feature>
<reference key="1">
    <citation type="submission" date="2009-05" db="EMBL/GenBank/DDBJ databases">
        <title>Complete sequence of Tolumonas auensis DSM 9187.</title>
        <authorList>
            <consortium name="US DOE Joint Genome Institute"/>
            <person name="Lucas S."/>
            <person name="Copeland A."/>
            <person name="Lapidus A."/>
            <person name="Glavina del Rio T."/>
            <person name="Tice H."/>
            <person name="Bruce D."/>
            <person name="Goodwin L."/>
            <person name="Pitluck S."/>
            <person name="Chertkov O."/>
            <person name="Brettin T."/>
            <person name="Detter J.C."/>
            <person name="Han C."/>
            <person name="Larimer F."/>
            <person name="Land M."/>
            <person name="Hauser L."/>
            <person name="Kyrpides N."/>
            <person name="Mikhailova N."/>
            <person name="Spring S."/>
            <person name="Beller H."/>
        </authorList>
    </citation>
    <scope>NUCLEOTIDE SEQUENCE [LARGE SCALE GENOMIC DNA]</scope>
    <source>
        <strain>DSM 9187 / NBRC 110442 / TA 4</strain>
    </source>
</reference>
<protein>
    <recommendedName>
        <fullName evidence="1">Ribosomal RNA large subunit methyltransferase E</fullName>
        <ecNumber evidence="1">2.1.1.166</ecNumber>
    </recommendedName>
    <alternativeName>
        <fullName evidence="1">23S rRNA Um2552 methyltransferase</fullName>
    </alternativeName>
    <alternativeName>
        <fullName evidence="1">rRNA (uridine-2'-O-)-methyltransferase</fullName>
    </alternativeName>
</protein>
<keyword id="KW-0963">Cytoplasm</keyword>
<keyword id="KW-0489">Methyltransferase</keyword>
<keyword id="KW-1185">Reference proteome</keyword>
<keyword id="KW-0698">rRNA processing</keyword>
<keyword id="KW-0949">S-adenosyl-L-methionine</keyword>
<keyword id="KW-0808">Transferase</keyword>
<dbReference type="EC" id="2.1.1.166" evidence="1"/>
<dbReference type="EMBL" id="CP001616">
    <property type="protein sequence ID" value="ACQ93851.1"/>
    <property type="molecule type" value="Genomic_DNA"/>
</dbReference>
<dbReference type="RefSeq" id="WP_015879319.1">
    <property type="nucleotide sequence ID" value="NC_012691.1"/>
</dbReference>
<dbReference type="SMR" id="C4L8Y1"/>
<dbReference type="STRING" id="595494.Tola_2253"/>
<dbReference type="KEGG" id="tau:Tola_2253"/>
<dbReference type="eggNOG" id="COG0293">
    <property type="taxonomic scope" value="Bacteria"/>
</dbReference>
<dbReference type="HOGENOM" id="CLU_009422_4_0_6"/>
<dbReference type="OrthoDB" id="9790080at2"/>
<dbReference type="Proteomes" id="UP000009073">
    <property type="component" value="Chromosome"/>
</dbReference>
<dbReference type="GO" id="GO:0005737">
    <property type="term" value="C:cytoplasm"/>
    <property type="evidence" value="ECO:0007669"/>
    <property type="project" value="UniProtKB-SubCell"/>
</dbReference>
<dbReference type="GO" id="GO:0008650">
    <property type="term" value="F:rRNA (uridine-2'-O-)-methyltransferase activity"/>
    <property type="evidence" value="ECO:0007669"/>
    <property type="project" value="UniProtKB-UniRule"/>
</dbReference>
<dbReference type="FunFam" id="3.40.50.150:FF:000005">
    <property type="entry name" value="Ribosomal RNA large subunit methyltransferase E"/>
    <property type="match status" value="1"/>
</dbReference>
<dbReference type="Gene3D" id="3.40.50.150">
    <property type="entry name" value="Vaccinia Virus protein VP39"/>
    <property type="match status" value="1"/>
</dbReference>
<dbReference type="HAMAP" id="MF_01547">
    <property type="entry name" value="RNA_methyltr_E"/>
    <property type="match status" value="1"/>
</dbReference>
<dbReference type="InterPro" id="IPR050082">
    <property type="entry name" value="RNA_methyltr_RlmE"/>
</dbReference>
<dbReference type="InterPro" id="IPR002877">
    <property type="entry name" value="RNA_MeTrfase_FtsJ_dom"/>
</dbReference>
<dbReference type="InterPro" id="IPR015507">
    <property type="entry name" value="rRNA-MeTfrase_E"/>
</dbReference>
<dbReference type="InterPro" id="IPR004512">
    <property type="entry name" value="rRNA_MeTrfase_gammaproteobac"/>
</dbReference>
<dbReference type="InterPro" id="IPR029063">
    <property type="entry name" value="SAM-dependent_MTases_sf"/>
</dbReference>
<dbReference type="NCBIfam" id="NF008390">
    <property type="entry name" value="PRK11188.1"/>
    <property type="match status" value="1"/>
</dbReference>
<dbReference type="NCBIfam" id="TIGR00438">
    <property type="entry name" value="rrmJ"/>
    <property type="match status" value="1"/>
</dbReference>
<dbReference type="PANTHER" id="PTHR10920">
    <property type="entry name" value="RIBOSOMAL RNA METHYLTRANSFERASE"/>
    <property type="match status" value="1"/>
</dbReference>
<dbReference type="PANTHER" id="PTHR10920:SF18">
    <property type="entry name" value="RRNA METHYLTRANSFERASE 2, MITOCHONDRIAL"/>
    <property type="match status" value="1"/>
</dbReference>
<dbReference type="Pfam" id="PF01728">
    <property type="entry name" value="FtsJ"/>
    <property type="match status" value="1"/>
</dbReference>
<dbReference type="PIRSF" id="PIRSF005461">
    <property type="entry name" value="23S_rRNA_mtase"/>
    <property type="match status" value="1"/>
</dbReference>
<dbReference type="SUPFAM" id="SSF53335">
    <property type="entry name" value="S-adenosyl-L-methionine-dependent methyltransferases"/>
    <property type="match status" value="1"/>
</dbReference>
<evidence type="ECO:0000255" key="1">
    <source>
        <dbReference type="HAMAP-Rule" id="MF_01547"/>
    </source>
</evidence>
<gene>
    <name evidence="1" type="primary">rlmE</name>
    <name evidence="1" type="synonym">ftsJ</name>
    <name evidence="1" type="synonym">rrmJ</name>
    <name type="ordered locus">Tola_2253</name>
</gene>
<sequence length="209" mass="23270">MSKKKRTASSTRWLKEHFDDKYVQQAQKQGLRSRAVFKIDEIQQKDKLIKQGMTVVDLGAAPGGWSQFCVEQVGPHGRVIACDILPMDPIAGVDFLQGDFREEAVLSALLGRVGEQKVDIILSDMAPNMSGTPAVDQPRSMYLVELALEMCKQVLAAKGSFVVKVFQGAGFEEYLKEVRSLFSVVKIRKPDSSRSRSREVYIVATGFKL</sequence>
<comment type="function">
    <text evidence="1">Specifically methylates the uridine in position 2552 of 23S rRNA at the 2'-O position of the ribose in the fully assembled 50S ribosomal subunit.</text>
</comment>
<comment type="catalytic activity">
    <reaction evidence="1">
        <text>uridine(2552) in 23S rRNA + S-adenosyl-L-methionine = 2'-O-methyluridine(2552) in 23S rRNA + S-adenosyl-L-homocysteine + H(+)</text>
        <dbReference type="Rhea" id="RHEA:42720"/>
        <dbReference type="Rhea" id="RHEA-COMP:10202"/>
        <dbReference type="Rhea" id="RHEA-COMP:10203"/>
        <dbReference type="ChEBI" id="CHEBI:15378"/>
        <dbReference type="ChEBI" id="CHEBI:57856"/>
        <dbReference type="ChEBI" id="CHEBI:59789"/>
        <dbReference type="ChEBI" id="CHEBI:65315"/>
        <dbReference type="ChEBI" id="CHEBI:74478"/>
        <dbReference type="EC" id="2.1.1.166"/>
    </reaction>
</comment>
<comment type="subcellular location">
    <subcellularLocation>
        <location evidence="1">Cytoplasm</location>
    </subcellularLocation>
</comment>
<comment type="similarity">
    <text evidence="1">Belongs to the class I-like SAM-binding methyltransferase superfamily. RNA methyltransferase RlmE family.</text>
</comment>